<proteinExistence type="inferred from homology"/>
<protein>
    <recommendedName>
        <fullName evidence="1">Glutaminase</fullName>
        <ecNumber evidence="1">3.5.1.2</ecNumber>
    </recommendedName>
</protein>
<reference key="1">
    <citation type="journal article" date="2002" name="Nature">
        <title>Complete genome sequence of the model actinomycete Streptomyces coelicolor A3(2).</title>
        <authorList>
            <person name="Bentley S.D."/>
            <person name="Chater K.F."/>
            <person name="Cerdeno-Tarraga A.-M."/>
            <person name="Challis G.L."/>
            <person name="Thomson N.R."/>
            <person name="James K.D."/>
            <person name="Harris D.E."/>
            <person name="Quail M.A."/>
            <person name="Kieser H."/>
            <person name="Harper D."/>
            <person name="Bateman A."/>
            <person name="Brown S."/>
            <person name="Chandra G."/>
            <person name="Chen C.W."/>
            <person name="Collins M."/>
            <person name="Cronin A."/>
            <person name="Fraser A."/>
            <person name="Goble A."/>
            <person name="Hidalgo J."/>
            <person name="Hornsby T."/>
            <person name="Howarth S."/>
            <person name="Huang C.-H."/>
            <person name="Kieser T."/>
            <person name="Larke L."/>
            <person name="Murphy L.D."/>
            <person name="Oliver K."/>
            <person name="O'Neil S."/>
            <person name="Rabbinowitsch E."/>
            <person name="Rajandream M.A."/>
            <person name="Rutherford K.M."/>
            <person name="Rutter S."/>
            <person name="Seeger K."/>
            <person name="Saunders D."/>
            <person name="Sharp S."/>
            <person name="Squares R."/>
            <person name="Squares S."/>
            <person name="Taylor K."/>
            <person name="Warren T."/>
            <person name="Wietzorrek A."/>
            <person name="Woodward J.R."/>
            <person name="Barrell B.G."/>
            <person name="Parkhill J."/>
            <person name="Hopwood D.A."/>
        </authorList>
    </citation>
    <scope>NUCLEOTIDE SEQUENCE [LARGE SCALE GENOMIC DNA]</scope>
    <source>
        <strain>ATCC BAA-471 / A3(2) / M145</strain>
    </source>
</reference>
<evidence type="ECO:0000255" key="1">
    <source>
        <dbReference type="HAMAP-Rule" id="MF_00313"/>
    </source>
</evidence>
<accession>P57755</accession>
<gene>
    <name evidence="1" type="primary">glsA</name>
    <name type="ordered locus">SCO7049</name>
    <name type="ORF">SC4G1.15</name>
</gene>
<comment type="catalytic activity">
    <reaction evidence="1">
        <text>L-glutamine + H2O = L-glutamate + NH4(+)</text>
        <dbReference type="Rhea" id="RHEA:15889"/>
        <dbReference type="ChEBI" id="CHEBI:15377"/>
        <dbReference type="ChEBI" id="CHEBI:28938"/>
        <dbReference type="ChEBI" id="CHEBI:29985"/>
        <dbReference type="ChEBI" id="CHEBI:58359"/>
        <dbReference type="EC" id="3.5.1.2"/>
    </reaction>
</comment>
<comment type="subunit">
    <text evidence="1">Homotetramer.</text>
</comment>
<comment type="similarity">
    <text evidence="1">Belongs to the glutaminase family.</text>
</comment>
<name>GLSA_STRCO</name>
<keyword id="KW-0378">Hydrolase</keyword>
<keyword id="KW-1185">Reference proteome</keyword>
<sequence>MSTPTTFRPVLERIAEEIERTPGSGRPADYIPALAARDPRRFGMAVAELDGTVYGVGDWREPFSAQSLTKVFTLALDLAREGDALWEHVGREPSGNPFNSLVQLEYENGIPRNPFINAGALVVTDRLHTRTGDAAGELLAFLRAESGNPDLGHDEEVAASEAAHGDRNAALAHFMASYGNIDNPVPVLLDQYFRQCSVAASCADLALATGFLARHGIRADGTRLLSRSRAKQINAVMLTCGTYDAAGDFAHRVGLPGKSGVGGGIIAVVPGHCTLCVWGPGLDERGNSVAGVAALDRFTTLTGLSVF</sequence>
<organism>
    <name type="scientific">Streptomyces coelicolor (strain ATCC BAA-471 / A3(2) / M145)</name>
    <dbReference type="NCBI Taxonomy" id="100226"/>
    <lineage>
        <taxon>Bacteria</taxon>
        <taxon>Bacillati</taxon>
        <taxon>Actinomycetota</taxon>
        <taxon>Actinomycetes</taxon>
        <taxon>Kitasatosporales</taxon>
        <taxon>Streptomycetaceae</taxon>
        <taxon>Streptomyces</taxon>
        <taxon>Streptomyces albidoflavus group</taxon>
    </lineage>
</organism>
<feature type="chain" id="PRO_0000110627" description="Glutaminase">
    <location>
        <begin position="1"/>
        <end position="307"/>
    </location>
</feature>
<feature type="binding site" evidence="1">
    <location>
        <position position="67"/>
    </location>
    <ligand>
        <name>substrate</name>
    </ligand>
</feature>
<feature type="binding site" evidence="1">
    <location>
        <position position="117"/>
    </location>
    <ligand>
        <name>substrate</name>
    </ligand>
</feature>
<feature type="binding site" evidence="1">
    <location>
        <position position="161"/>
    </location>
    <ligand>
        <name>substrate</name>
    </ligand>
</feature>
<feature type="binding site" evidence="1">
    <location>
        <position position="168"/>
    </location>
    <ligand>
        <name>substrate</name>
    </ligand>
</feature>
<feature type="binding site" evidence="1">
    <location>
        <position position="192"/>
    </location>
    <ligand>
        <name>substrate</name>
    </ligand>
</feature>
<feature type="binding site" evidence="1">
    <location>
        <position position="243"/>
    </location>
    <ligand>
        <name>substrate</name>
    </ligand>
</feature>
<feature type="binding site" evidence="1">
    <location>
        <position position="261"/>
    </location>
    <ligand>
        <name>substrate</name>
    </ligand>
</feature>
<dbReference type="EC" id="3.5.1.2" evidence="1"/>
<dbReference type="EMBL" id="AL939130">
    <property type="protein sequence ID" value="CAC01547.1"/>
    <property type="molecule type" value="Genomic_DNA"/>
</dbReference>
<dbReference type="RefSeq" id="NP_631111.1">
    <property type="nucleotide sequence ID" value="NC_003888.3"/>
</dbReference>
<dbReference type="SMR" id="P57755"/>
<dbReference type="STRING" id="100226.gene:17764709"/>
<dbReference type="PaxDb" id="100226-SCO7049"/>
<dbReference type="KEGG" id="sco:SCO7049"/>
<dbReference type="PATRIC" id="fig|100226.15.peg.7153"/>
<dbReference type="eggNOG" id="COG2066">
    <property type="taxonomic scope" value="Bacteria"/>
</dbReference>
<dbReference type="HOGENOM" id="CLU_027932_1_1_11"/>
<dbReference type="InParanoid" id="P57755"/>
<dbReference type="OrthoDB" id="9788822at2"/>
<dbReference type="PhylomeDB" id="P57755"/>
<dbReference type="Proteomes" id="UP000001973">
    <property type="component" value="Chromosome"/>
</dbReference>
<dbReference type="GO" id="GO:0004359">
    <property type="term" value="F:glutaminase activity"/>
    <property type="evidence" value="ECO:0000318"/>
    <property type="project" value="GO_Central"/>
</dbReference>
<dbReference type="GO" id="GO:0006537">
    <property type="term" value="P:glutamate biosynthetic process"/>
    <property type="evidence" value="ECO:0000318"/>
    <property type="project" value="GO_Central"/>
</dbReference>
<dbReference type="GO" id="GO:0006543">
    <property type="term" value="P:glutamine catabolic process"/>
    <property type="evidence" value="ECO:0000318"/>
    <property type="project" value="GO_Central"/>
</dbReference>
<dbReference type="FunFam" id="3.40.710.10:FF:000005">
    <property type="entry name" value="Glutaminase"/>
    <property type="match status" value="1"/>
</dbReference>
<dbReference type="Gene3D" id="3.40.710.10">
    <property type="entry name" value="DD-peptidase/beta-lactamase superfamily"/>
    <property type="match status" value="1"/>
</dbReference>
<dbReference type="HAMAP" id="MF_00313">
    <property type="entry name" value="Glutaminase"/>
    <property type="match status" value="1"/>
</dbReference>
<dbReference type="InterPro" id="IPR012338">
    <property type="entry name" value="Beta-lactam/transpept-like"/>
</dbReference>
<dbReference type="InterPro" id="IPR015868">
    <property type="entry name" value="Glutaminase"/>
</dbReference>
<dbReference type="NCBIfam" id="TIGR03814">
    <property type="entry name" value="Gln_ase"/>
    <property type="match status" value="1"/>
</dbReference>
<dbReference type="NCBIfam" id="NF002133">
    <property type="entry name" value="PRK00971.1-2"/>
    <property type="match status" value="1"/>
</dbReference>
<dbReference type="PANTHER" id="PTHR12544">
    <property type="entry name" value="GLUTAMINASE"/>
    <property type="match status" value="1"/>
</dbReference>
<dbReference type="PANTHER" id="PTHR12544:SF29">
    <property type="entry name" value="GLUTAMINASE"/>
    <property type="match status" value="1"/>
</dbReference>
<dbReference type="Pfam" id="PF04960">
    <property type="entry name" value="Glutaminase"/>
    <property type="match status" value="1"/>
</dbReference>
<dbReference type="SUPFAM" id="SSF56601">
    <property type="entry name" value="beta-lactamase/transpeptidase-like"/>
    <property type="match status" value="1"/>
</dbReference>